<gene>
    <name type="primary">trxB</name>
    <name type="ordered locus">UU074</name>
</gene>
<comment type="catalytic activity">
    <reaction>
        <text>[thioredoxin]-dithiol + NADP(+) = [thioredoxin]-disulfide + NADPH + H(+)</text>
        <dbReference type="Rhea" id="RHEA:20345"/>
        <dbReference type="Rhea" id="RHEA-COMP:10698"/>
        <dbReference type="Rhea" id="RHEA-COMP:10700"/>
        <dbReference type="ChEBI" id="CHEBI:15378"/>
        <dbReference type="ChEBI" id="CHEBI:29950"/>
        <dbReference type="ChEBI" id="CHEBI:50058"/>
        <dbReference type="ChEBI" id="CHEBI:57783"/>
        <dbReference type="ChEBI" id="CHEBI:58349"/>
        <dbReference type="EC" id="1.8.1.9"/>
    </reaction>
</comment>
<comment type="cofactor">
    <cofactor evidence="2">
        <name>FAD</name>
        <dbReference type="ChEBI" id="CHEBI:57692"/>
    </cofactor>
    <text evidence="2">Binds 1 FAD per subunit.</text>
</comment>
<comment type="subunit">
    <text evidence="2">Homodimer.</text>
</comment>
<comment type="subcellular location">
    <subcellularLocation>
        <location evidence="1">Cytoplasm</location>
    </subcellularLocation>
</comment>
<comment type="miscellaneous">
    <text>The active site is a redox-active disulfide bond.</text>
</comment>
<comment type="similarity">
    <text evidence="3">Belongs to the class-II pyridine nucleotide-disulfide oxidoreductase family.</text>
</comment>
<sequence>MNQEVYDLVIIGAGPAGLAAAVYAKRSGLNVIIVEKQFPGGKIALTSNVENYLGINSIPGPELAYKMYEQVLNLNVSIIYEAADEISLKEKYKKIKLTTQTLITKTVIIATGTENRRLNILGELEFENKGISYCAICDGPLYKNKAVSVIGSGNSAVEEAIYLATIAKEVHLIANKPQFKAEQQLVQIANNTPNIKIYYNKQTFEFFGHQFLEGLKFRDLITNEVTTLNIEANFTFIGLLPSRINTNNLCIFNEVNGFITTDKNMQTSVCGIFAAGDIVDKNVRQIATATNDGVIAALYAKEYITRNNW</sequence>
<protein>
    <recommendedName>
        <fullName>Thioredoxin reductase</fullName>
        <shortName>TRXR</shortName>
        <ecNumber>1.8.1.9</ecNumber>
    </recommendedName>
</protein>
<reference key="1">
    <citation type="journal article" date="2000" name="Nature">
        <title>The complete sequence of the mucosal pathogen Ureaplasma urealyticum.</title>
        <authorList>
            <person name="Glass J.I."/>
            <person name="Lefkowitz E.J."/>
            <person name="Glass J.S."/>
            <person name="Heiner C.R."/>
            <person name="Chen E.Y."/>
            <person name="Cassell G.H."/>
        </authorList>
    </citation>
    <scope>NUCLEOTIDE SEQUENCE [LARGE SCALE GENOMIC DNA]</scope>
    <source>
        <strain>ATCC 700970</strain>
    </source>
</reference>
<organism>
    <name type="scientific">Ureaplasma parvum serovar 3 (strain ATCC 700970)</name>
    <dbReference type="NCBI Taxonomy" id="273119"/>
    <lineage>
        <taxon>Bacteria</taxon>
        <taxon>Bacillati</taxon>
        <taxon>Mycoplasmatota</taxon>
        <taxon>Mycoplasmoidales</taxon>
        <taxon>Mycoplasmoidaceae</taxon>
        <taxon>Ureaplasma</taxon>
    </lineage>
</organism>
<accession>Q9PR71</accession>
<dbReference type="EC" id="1.8.1.9"/>
<dbReference type="EMBL" id="AF222894">
    <property type="protein sequence ID" value="AAF30479.1"/>
    <property type="molecule type" value="Genomic_DNA"/>
</dbReference>
<dbReference type="RefSeq" id="WP_006688550.1">
    <property type="nucleotide sequence ID" value="NC_002162.1"/>
</dbReference>
<dbReference type="SMR" id="Q9PR71"/>
<dbReference type="STRING" id="273119.UU074"/>
<dbReference type="EnsemblBacteria" id="AAF30479">
    <property type="protein sequence ID" value="AAF30479"/>
    <property type="gene ID" value="UU074"/>
</dbReference>
<dbReference type="GeneID" id="29672186"/>
<dbReference type="KEGG" id="uur:UU074"/>
<dbReference type="eggNOG" id="COG0492">
    <property type="taxonomic scope" value="Bacteria"/>
</dbReference>
<dbReference type="HOGENOM" id="CLU_031864_5_3_14"/>
<dbReference type="OrthoDB" id="9806179at2"/>
<dbReference type="Proteomes" id="UP000000423">
    <property type="component" value="Chromosome"/>
</dbReference>
<dbReference type="GO" id="GO:0005737">
    <property type="term" value="C:cytoplasm"/>
    <property type="evidence" value="ECO:0007669"/>
    <property type="project" value="UniProtKB-SubCell"/>
</dbReference>
<dbReference type="GO" id="GO:0004791">
    <property type="term" value="F:thioredoxin-disulfide reductase (NADPH) activity"/>
    <property type="evidence" value="ECO:0007669"/>
    <property type="project" value="UniProtKB-EC"/>
</dbReference>
<dbReference type="Gene3D" id="3.50.50.60">
    <property type="entry name" value="FAD/NAD(P)-binding domain"/>
    <property type="match status" value="2"/>
</dbReference>
<dbReference type="InterPro" id="IPR036188">
    <property type="entry name" value="FAD/NAD-bd_sf"/>
</dbReference>
<dbReference type="InterPro" id="IPR023753">
    <property type="entry name" value="FAD/NAD-binding_dom"/>
</dbReference>
<dbReference type="InterPro" id="IPR050097">
    <property type="entry name" value="Ferredoxin-NADP_redctase_2"/>
</dbReference>
<dbReference type="InterPro" id="IPR008255">
    <property type="entry name" value="Pyr_nucl-diS_OxRdtase_2_AS"/>
</dbReference>
<dbReference type="PANTHER" id="PTHR48105">
    <property type="entry name" value="THIOREDOXIN REDUCTASE 1-RELATED-RELATED"/>
    <property type="match status" value="1"/>
</dbReference>
<dbReference type="Pfam" id="PF07992">
    <property type="entry name" value="Pyr_redox_2"/>
    <property type="match status" value="1"/>
</dbReference>
<dbReference type="PRINTS" id="PR00368">
    <property type="entry name" value="FADPNR"/>
</dbReference>
<dbReference type="PRINTS" id="PR00469">
    <property type="entry name" value="PNDRDTASEII"/>
</dbReference>
<dbReference type="SUPFAM" id="SSF51905">
    <property type="entry name" value="FAD/NAD(P)-binding domain"/>
    <property type="match status" value="1"/>
</dbReference>
<dbReference type="PROSITE" id="PS00573">
    <property type="entry name" value="PYRIDINE_REDOX_2"/>
    <property type="match status" value="1"/>
</dbReference>
<proteinExistence type="inferred from homology"/>
<feature type="chain" id="PRO_0000166755" description="Thioredoxin reductase">
    <location>
        <begin position="1"/>
        <end position="309"/>
    </location>
</feature>
<feature type="binding site" evidence="2">
    <location>
        <begin position="35"/>
        <end position="42"/>
    </location>
    <ligand>
        <name>FAD</name>
        <dbReference type="ChEBI" id="CHEBI:57692"/>
    </ligand>
</feature>
<feature type="binding site" evidence="2">
    <location>
        <begin position="277"/>
        <end position="286"/>
    </location>
    <ligand>
        <name>FAD</name>
        <dbReference type="ChEBI" id="CHEBI:57692"/>
    </ligand>
</feature>
<feature type="disulfide bond" description="Redox-active" evidence="2">
    <location>
        <begin position="134"/>
        <end position="137"/>
    </location>
</feature>
<name>TRXB_UREPA</name>
<evidence type="ECO:0000250" key="1"/>
<evidence type="ECO:0000250" key="2">
    <source>
        <dbReference type="UniProtKB" id="P0A9P4"/>
    </source>
</evidence>
<evidence type="ECO:0000305" key="3"/>
<keyword id="KW-0963">Cytoplasm</keyword>
<keyword id="KW-1015">Disulfide bond</keyword>
<keyword id="KW-0274">FAD</keyword>
<keyword id="KW-0285">Flavoprotein</keyword>
<keyword id="KW-0521">NADP</keyword>
<keyword id="KW-0560">Oxidoreductase</keyword>
<keyword id="KW-0676">Redox-active center</keyword>
<keyword id="KW-1185">Reference proteome</keyword>